<protein>
    <recommendedName>
        <fullName>CRISPR-associated protein Cas8a1/Csx13</fullName>
    </recommendedName>
    <alternativeName>
        <fullName>CRISPR-associated protein Cas8a1/Csx13, Myxan subtype</fullName>
    </alternativeName>
    <alternativeName>
        <fullName>Fruiting body developmental protein T</fullName>
    </alternativeName>
</protein>
<gene>
    <name type="primary">devT</name>
    <name type="synonym">cas8a1</name>
    <name type="ordered locus">MXAN_7263</name>
</gene>
<feature type="chain" id="PRO_0000066192" description="CRISPR-associated protein Cas8a1/Csx13">
    <location>
        <begin position="1"/>
        <end position="570"/>
    </location>
</feature>
<feature type="region of interest" description="Disordered" evidence="2">
    <location>
        <begin position="1"/>
        <end position="23"/>
    </location>
</feature>
<feature type="region of interest" description="Disordered" evidence="2">
    <location>
        <begin position="551"/>
        <end position="570"/>
    </location>
</feature>
<feature type="sequence conflict" description="In Ref. 2; L19029." evidence="5" ref="2">
    <original>EA</original>
    <variation>DR</variation>
    <location>
        <begin position="376"/>
        <end position="377"/>
    </location>
</feature>
<organism>
    <name type="scientific">Myxococcus xanthus (strain DK1622)</name>
    <dbReference type="NCBI Taxonomy" id="246197"/>
    <lineage>
        <taxon>Bacteria</taxon>
        <taxon>Pseudomonadati</taxon>
        <taxon>Myxococcota</taxon>
        <taxon>Myxococcia</taxon>
        <taxon>Myxococcales</taxon>
        <taxon>Cystobacterineae</taxon>
        <taxon>Myxococcaceae</taxon>
        <taxon>Myxococcus</taxon>
    </lineage>
</organism>
<proteinExistence type="evidence at transcript level"/>
<reference key="1">
    <citation type="journal article" date="2006" name="Proc. Natl. Acad. Sci. U.S.A.">
        <title>Evolution of sensory complexity recorded in a myxobacterial genome.</title>
        <authorList>
            <person name="Goldman B.S."/>
            <person name="Nierman W.C."/>
            <person name="Kaiser D."/>
            <person name="Slater S.C."/>
            <person name="Durkin A.S."/>
            <person name="Eisen J.A."/>
            <person name="Ronning C.M."/>
            <person name="Barbazuk W.B."/>
            <person name="Blanchard M."/>
            <person name="Field C."/>
            <person name="Halling C."/>
            <person name="Hinkle G."/>
            <person name="Iartchuk O."/>
            <person name="Kim H.S."/>
            <person name="Mackenzie C."/>
            <person name="Madupu R."/>
            <person name="Miller N."/>
            <person name="Shvartsbeyn A."/>
            <person name="Sullivan S.A."/>
            <person name="Vaudin M."/>
            <person name="Wiegand R."/>
            <person name="Kaplan H.B."/>
        </authorList>
    </citation>
    <scope>NUCLEOTIDE SEQUENCE [LARGE SCALE GENOMIC DNA]</scope>
    <source>
        <strain>DK1622</strain>
    </source>
</reference>
<reference key="2">
    <citation type="journal article" date="1993" name="J. Bacteriol.">
        <title>devRS, an autoregulated and essential genetic locus for fruiting body development in Myxococcus xanthus.</title>
        <authorList>
            <person name="Thoeny-Meyer L."/>
            <person name="Kaiser D."/>
        </authorList>
    </citation>
    <scope>NUCLEOTIDE SEQUENCE [GENOMIC DNA] OF 346-570</scope>
    <source>
        <strain>DK1622</strain>
    </source>
</reference>
<reference key="3">
    <citation type="journal article" date="2002" name="J. Bacteriol.">
        <title>The DevT protein stimulates synthesis of FruA, a signal transduction protein required for fruiting body morphogenesis in Myxococcus xanthus.</title>
        <authorList>
            <person name="Boysen A."/>
            <person name="Ellehauge E."/>
            <person name="Julien B."/>
            <person name="Sogaard-Andersen L."/>
        </authorList>
    </citation>
    <scope>DISRUPTION PHENOTYPE</scope>
    <source>
        <strain>DK1622</strain>
    </source>
</reference>
<reference key="4">
    <citation type="journal article" date="2007" name="J. Bacteriol.">
        <title>Regulation of dev, an operon that includes genes essential for Myxococcus xanthus development and CRISPR-associated genes and repeats.</title>
        <authorList>
            <person name="Viswanathan P."/>
            <person name="Murphy K."/>
            <person name="Julien B."/>
            <person name="Garza A.G."/>
            <person name="Kroos L."/>
        </authorList>
    </citation>
    <scope>INDUCTION</scope>
    <scope>OPERON STRUCTURE</scope>
    <source>
        <strain>DK1622</strain>
    </source>
</reference>
<name>DEVT_MYXXD</name>
<sequence>MACMAPRGPAAIPHPSSERAGLRRPARCAMAKAVNPRKKALPAPLSIRLYAPGMTPLLRAGAGGLAASLRAILGSASPAAPWPSPVRLGPGTATVEQEAIHLDWGGKAPEATLRALFGASFRVKQGFIDLPGTRPPGAPEPPPELAAALHDALKVTFLQHGKSTQGGARRRVTFEVDARPVIVESQGYDSFVHQTAWQSVLEALEVGSTSLASWAYPGAAERHIGVRVTKVEYTAAEALCACFALVGCVSYKLPQLRGGAFVALAPTNLVRFAELRPGLTPKRLRDVAVAGASDAVLAAQLVMAQEAGKKRLGAVLGTTEAVALRQMPWNAQQKIRGAVVRQDAVLEEVLDRYEAAAAALPHTLRVRKPEGKATGEASYFIAISALRAFITENLAASRPWYADFATATTAEGRFIHDYRDRDNLGALLWHERKGLIAMHPYLGEAEQWLVQSVHLALRSRFKSIYADTKESAPATRSNRLKGERERLRLSFAGAKTPEQVRAALADLWSRAGTNRELQEHWRDILQLLGPERWRAARDLALVALASYQGKGGEAAELEDADEAAGASEQS</sequence>
<dbReference type="EMBL" id="CP000113">
    <property type="protein sequence ID" value="ABF87502.1"/>
    <property type="molecule type" value="Genomic_DNA"/>
</dbReference>
<dbReference type="EMBL" id="L19029">
    <property type="status" value="NOT_ANNOTATED_CDS"/>
    <property type="molecule type" value="Unassigned_DNA"/>
</dbReference>
<dbReference type="PIR" id="A49941">
    <property type="entry name" value="A49941"/>
</dbReference>
<dbReference type="SMR" id="P38586"/>
<dbReference type="STRING" id="246197.MXAN_7263"/>
<dbReference type="EnsemblBacteria" id="ABF87502">
    <property type="protein sequence ID" value="ABF87502"/>
    <property type="gene ID" value="MXAN_7263"/>
</dbReference>
<dbReference type="KEGG" id="mxa:MXAN_7263"/>
<dbReference type="eggNOG" id="ENOG502ZADP">
    <property type="taxonomic scope" value="Bacteria"/>
</dbReference>
<dbReference type="HOGENOM" id="CLU_531807_0_0_7"/>
<dbReference type="Proteomes" id="UP000002402">
    <property type="component" value="Chromosome"/>
</dbReference>
<dbReference type="GO" id="GO:0051607">
    <property type="term" value="P:defense response to virus"/>
    <property type="evidence" value="ECO:0007669"/>
    <property type="project" value="UniProtKB-KW"/>
</dbReference>
<dbReference type="GO" id="GO:0030435">
    <property type="term" value="P:sporulation resulting in formation of a cellular spore"/>
    <property type="evidence" value="ECO:0007669"/>
    <property type="project" value="UniProtKB-KW"/>
</dbReference>
<dbReference type="CDD" id="cd09714">
    <property type="entry name" value="Cas8c'_I-D"/>
    <property type="match status" value="1"/>
</dbReference>
<dbReference type="CDD" id="cd09713">
    <property type="entry name" value="Cas8c_I-C"/>
    <property type="match status" value="1"/>
</dbReference>
<dbReference type="InterPro" id="IPR027811">
    <property type="entry name" value="CRISPR-assoc_Csx13_C"/>
</dbReference>
<dbReference type="InterPro" id="IPR019989">
    <property type="entry name" value="CRISPR-assoc_Csx13_N"/>
</dbReference>
<dbReference type="NCBIfam" id="TIGR03486">
    <property type="entry name" value="cas_csx13_C"/>
    <property type="match status" value="1"/>
</dbReference>
<dbReference type="NCBIfam" id="TIGR03485">
    <property type="entry name" value="cas_csx13_N"/>
    <property type="match status" value="1"/>
</dbReference>
<evidence type="ECO:0000250" key="1"/>
<evidence type="ECO:0000256" key="2">
    <source>
        <dbReference type="SAM" id="MobiDB-lite"/>
    </source>
</evidence>
<evidence type="ECO:0000269" key="3">
    <source>
    </source>
</evidence>
<evidence type="ECO:0000269" key="4">
    <source>
    </source>
</evidence>
<evidence type="ECO:0000305" key="5"/>
<keyword id="KW-0051">Antiviral defense</keyword>
<keyword id="KW-0293">Fruiting body</keyword>
<keyword id="KW-1185">Reference proteome</keyword>
<keyword id="KW-0749">Sporulation</keyword>
<accession>P38586</accession>
<accession>Q1CW47</accession>
<comment type="function">
    <text evidence="1">CRISPR (clustered regularly interspaced short palindromic repeat) is an adaptive immune system that provides protection against mobile genetic elements (viruses, transposable elements and conjugative plasmids). CRISPR clusters contain spacers, sequences complementary to antecedent mobile elements, and target invading nucleic acids. CRISPR clusters are transcribed and processed into CRISPR RNA (crRNA) (By similarity).</text>
</comment>
<comment type="function">
    <text>Functions in an unknown fashion to stimulate transcription of fruA independently of the intracellular A- and E-developmental signals.</text>
</comment>
<comment type="developmental stage">
    <text>Operon expression begins by 6 hours after starvation has initiated development and is under strong negative regulation by DevS.</text>
</comment>
<comment type="induction">
    <text evidence="4">Part of an operon going from at least MXAN_7266 to MXAN_7259 that includes a CRISPR operon with transcription continuing into the pre-crRNA locus.</text>
</comment>
<comment type="disruption phenotype">
    <text evidence="3">Decreases sporulation 1000 to 10000-fold, aggregation is delayed. Delays for C-signal-dependent methylation of FrczCD and impairs fruA transcription. This mutant should not have polar effects on downstream genes.</text>
</comment>
<comment type="similarity">
    <text evidence="5">Belongs to the CRISPR-associated protein Cas8a1/Csx13 family. Myxan subtype subfamily.</text>
</comment>